<name>CDNF_HUMAN</name>
<accession>Q49AH0</accession>
<accession>A2RUU0</accession>
<accession>B4DVW3</accession>
<protein>
    <recommendedName>
        <fullName>Cerebral dopamine neurotrophic factor</fullName>
    </recommendedName>
    <alternativeName>
        <fullName>ARMET-like protein 1</fullName>
    </alternativeName>
    <alternativeName>
        <fullName>Conserved dopamine neurotrophic factor</fullName>
    </alternativeName>
</protein>
<comment type="function">
    <text evidence="1">Trophic factor for dopamine neurons. Prevents the 6-hydroxydopamine (6-OHDA)-induced degeneration of dopaminergic neurons. When administered after 6-OHDA-lesioning, restores the dopaminergic function and prevents the degeneration of dopaminergic neurons in substantia nigra (By similarity).</text>
</comment>
<comment type="subcellular location">
    <subcellularLocation>
        <location evidence="3 4">Secreted</location>
    </subcellularLocation>
</comment>
<comment type="alternative products">
    <event type="alternative splicing"/>
    <isoform>
        <id>Q49AH0-1</id>
        <name>1</name>
        <sequence type="displayed"/>
    </isoform>
    <isoform>
        <id>Q49AH0-2</id>
        <name>2</name>
        <sequence type="described" ref="VSP_023986"/>
    </isoform>
</comment>
<comment type="tissue specificity">
    <text evidence="3">Widely expressed in neuronal and non-neuronal tissues. In the brain, highest levels in the optic nerve and corpus callosum.</text>
</comment>
<comment type="induction">
    <text evidence="4">Not induced by endoplasmic reticulum stress.</text>
</comment>
<comment type="similarity">
    <text evidence="7">Belongs to the ARMET family.</text>
</comment>
<feature type="signal peptide" evidence="2">
    <location>
        <begin position="1"/>
        <end position="24"/>
    </location>
</feature>
<feature type="chain" id="PRO_0000281137" description="Cerebral dopamine neurotrophic factor">
    <location>
        <begin position="25"/>
        <end position="187"/>
    </location>
</feature>
<feature type="disulfide bond" evidence="5">
    <location>
        <begin position="37"/>
        <end position="124"/>
    </location>
</feature>
<feature type="disulfide bond" evidence="5">
    <location>
        <begin position="40"/>
        <end position="113"/>
    </location>
</feature>
<feature type="disulfide bond" evidence="5">
    <location>
        <begin position="71"/>
        <end position="82"/>
    </location>
</feature>
<feature type="splice variant" id="VSP_023986" description="In isoform 2." evidence="6">
    <location>
        <begin position="1"/>
        <end position="102"/>
    </location>
</feature>
<feature type="helix" evidence="8">
    <location>
        <begin position="38"/>
        <end position="53"/>
    </location>
</feature>
<feature type="helix" evidence="8">
    <location>
        <begin position="60"/>
        <end position="71"/>
    </location>
</feature>
<feature type="helix" evidence="8">
    <location>
        <begin position="76"/>
        <end position="84"/>
    </location>
</feature>
<feature type="helix" evidence="8">
    <location>
        <begin position="93"/>
        <end position="103"/>
    </location>
</feature>
<feature type="turn" evidence="8">
    <location>
        <begin position="104"/>
        <end position="106"/>
    </location>
</feature>
<feature type="helix" evidence="8">
    <location>
        <begin position="109"/>
        <end position="117"/>
    </location>
</feature>
<feature type="helix" evidence="8">
    <location>
        <begin position="121"/>
        <end position="124"/>
    </location>
</feature>
<feature type="helix" evidence="9">
    <location>
        <begin position="133"/>
        <end position="135"/>
    </location>
</feature>
<feature type="strand" evidence="9">
    <location>
        <begin position="139"/>
        <end position="141"/>
    </location>
</feature>
<feature type="helix" evidence="9">
    <location>
        <begin position="144"/>
        <end position="153"/>
    </location>
</feature>
<feature type="helix" evidence="9">
    <location>
        <begin position="164"/>
        <end position="178"/>
    </location>
</feature>
<keyword id="KW-0002">3D-structure</keyword>
<keyword id="KW-0025">Alternative splicing</keyword>
<keyword id="KW-1015">Disulfide bond</keyword>
<keyword id="KW-0339">Growth factor</keyword>
<keyword id="KW-1267">Proteomics identification</keyword>
<keyword id="KW-1185">Reference proteome</keyword>
<keyword id="KW-0964">Secreted</keyword>
<keyword id="KW-0732">Signal</keyword>
<gene>
    <name type="primary">CDNF</name>
    <name type="synonym">ARMETL1</name>
</gene>
<dbReference type="EMBL" id="AK301259">
    <property type="protein sequence ID" value="BAG62825.1"/>
    <property type="molecule type" value="mRNA"/>
</dbReference>
<dbReference type="EMBL" id="CH471072">
    <property type="protein sequence ID" value="EAW86264.1"/>
    <property type="molecule type" value="Genomic_DNA"/>
</dbReference>
<dbReference type="EMBL" id="BC037872">
    <property type="protein sequence ID" value="AAH37872.1"/>
    <property type="molecule type" value="mRNA"/>
</dbReference>
<dbReference type="EMBL" id="BC133042">
    <property type="protein sequence ID" value="AAI33043.1"/>
    <property type="molecule type" value="mRNA"/>
</dbReference>
<dbReference type="EMBL" id="BC133044">
    <property type="protein sequence ID" value="AAI33045.1"/>
    <property type="molecule type" value="mRNA"/>
</dbReference>
<dbReference type="CCDS" id="CCDS31148.1">
    <molecule id="Q49AH0-1"/>
</dbReference>
<dbReference type="RefSeq" id="NP_001025125.2">
    <molecule id="Q49AH0-1"/>
    <property type="nucleotide sequence ID" value="NM_001029954.3"/>
</dbReference>
<dbReference type="PDB" id="2LPN">
    <property type="method" value="NMR"/>
    <property type="chains" value="A=27-131"/>
</dbReference>
<dbReference type="PDB" id="2W50">
    <property type="method" value="X-ray"/>
    <property type="resolution" value="1.60 A"/>
    <property type="chains" value="A/B=32-133"/>
</dbReference>
<dbReference type="PDB" id="4BIT">
    <property type="method" value="NMR"/>
    <property type="chains" value="A=27-187"/>
</dbReference>
<dbReference type="PDB" id="8QAJ">
    <property type="method" value="NMR"/>
    <property type="chains" value="A=127-187"/>
</dbReference>
<dbReference type="PDBsum" id="2LPN"/>
<dbReference type="PDBsum" id="2W50"/>
<dbReference type="PDBsum" id="4BIT"/>
<dbReference type="PDBsum" id="8QAJ"/>
<dbReference type="BMRB" id="Q49AH0"/>
<dbReference type="SASBDB" id="Q49AH0"/>
<dbReference type="SMR" id="Q49AH0"/>
<dbReference type="BioGRID" id="137570">
    <property type="interactions" value="6"/>
</dbReference>
<dbReference type="FunCoup" id="Q49AH0">
    <property type="interactions" value="116"/>
</dbReference>
<dbReference type="IntAct" id="Q49AH0">
    <property type="interactions" value="1"/>
</dbReference>
<dbReference type="STRING" id="9606.ENSP00000419395"/>
<dbReference type="GlyGen" id="Q49AH0">
    <property type="glycosylation" value="1 site, 1 N-linked glycan (1 site)"/>
</dbReference>
<dbReference type="iPTMnet" id="Q49AH0"/>
<dbReference type="PhosphoSitePlus" id="Q49AH0"/>
<dbReference type="BioMuta" id="CDNF"/>
<dbReference type="DMDM" id="143955278"/>
<dbReference type="jPOST" id="Q49AH0"/>
<dbReference type="MassIVE" id="Q49AH0"/>
<dbReference type="PaxDb" id="9606-ENSP00000419395"/>
<dbReference type="PeptideAtlas" id="Q49AH0"/>
<dbReference type="ProteomicsDB" id="62043">
    <molecule id="Q49AH0-1"/>
</dbReference>
<dbReference type="ProteomicsDB" id="62044">
    <molecule id="Q49AH0-2"/>
</dbReference>
<dbReference type="Antibodypedia" id="24933">
    <property type="antibodies" value="302 antibodies from 32 providers"/>
</dbReference>
<dbReference type="DNASU" id="441549"/>
<dbReference type="Ensembl" id="ENST00000378442.5">
    <molecule id="Q49AH0-2"/>
    <property type="protein sequence ID" value="ENSP00000367703.1"/>
    <property type="gene ID" value="ENSG00000185267.10"/>
</dbReference>
<dbReference type="Ensembl" id="ENST00000465530.2">
    <molecule id="Q49AH0-1"/>
    <property type="protein sequence ID" value="ENSP00000419395.1"/>
    <property type="gene ID" value="ENSG00000185267.10"/>
</dbReference>
<dbReference type="GeneID" id="441549"/>
<dbReference type="KEGG" id="hsa:441549"/>
<dbReference type="MANE-Select" id="ENST00000465530.2">
    <property type="protein sequence ID" value="ENSP00000419395.1"/>
    <property type="RefSeq nucleotide sequence ID" value="NM_001029954.3"/>
    <property type="RefSeq protein sequence ID" value="NP_001025125.2"/>
</dbReference>
<dbReference type="UCSC" id="uc001inb.2">
    <molecule id="Q49AH0-1"/>
    <property type="organism name" value="human"/>
</dbReference>
<dbReference type="AGR" id="HGNC:24913"/>
<dbReference type="CTD" id="441549"/>
<dbReference type="DisGeNET" id="441549"/>
<dbReference type="GeneCards" id="CDNF"/>
<dbReference type="HGNC" id="HGNC:24913">
    <property type="gene designation" value="CDNF"/>
</dbReference>
<dbReference type="HPA" id="ENSG00000185267">
    <property type="expression patterns" value="Tissue enhanced (skeletal muscle, tongue)"/>
</dbReference>
<dbReference type="MIM" id="611233">
    <property type="type" value="gene"/>
</dbReference>
<dbReference type="neXtProt" id="NX_Q49AH0"/>
<dbReference type="OpenTargets" id="ENSG00000185267"/>
<dbReference type="PharmGKB" id="PA165548325"/>
<dbReference type="VEuPathDB" id="HostDB:ENSG00000185267"/>
<dbReference type="eggNOG" id="KOG4154">
    <property type="taxonomic scope" value="Eukaryota"/>
</dbReference>
<dbReference type="GeneTree" id="ENSGT00390000007160"/>
<dbReference type="HOGENOM" id="CLU_2624470_0_0_1"/>
<dbReference type="InParanoid" id="Q49AH0"/>
<dbReference type="OMA" id="DSWGEVC"/>
<dbReference type="OrthoDB" id="5597848at2759"/>
<dbReference type="PAN-GO" id="Q49AH0">
    <property type="GO annotations" value="4 GO annotations based on evolutionary models"/>
</dbReference>
<dbReference type="PhylomeDB" id="Q49AH0"/>
<dbReference type="TreeFam" id="TF314252"/>
<dbReference type="PathwayCommons" id="Q49AH0"/>
<dbReference type="SignaLink" id="Q49AH0"/>
<dbReference type="BioGRID-ORCS" id="441549">
    <property type="hits" value="5 hits in 1107 CRISPR screens"/>
</dbReference>
<dbReference type="EvolutionaryTrace" id="Q49AH0"/>
<dbReference type="GeneWiki" id="Cerebral_dopamine_neurotrophic_factor"/>
<dbReference type="GenomeRNAi" id="441549"/>
<dbReference type="Pharos" id="Q49AH0">
    <property type="development level" value="Tbio"/>
</dbReference>
<dbReference type="PRO" id="PR:Q49AH0"/>
<dbReference type="Proteomes" id="UP000005640">
    <property type="component" value="Chromosome 10"/>
</dbReference>
<dbReference type="RNAct" id="Q49AH0">
    <property type="molecule type" value="protein"/>
</dbReference>
<dbReference type="Bgee" id="ENSG00000185267">
    <property type="expression patterns" value="Expressed in hindlimb stylopod muscle and 109 other cell types or tissues"/>
</dbReference>
<dbReference type="GO" id="GO:0005783">
    <property type="term" value="C:endoplasmic reticulum"/>
    <property type="evidence" value="ECO:0000318"/>
    <property type="project" value="GO_Central"/>
</dbReference>
<dbReference type="GO" id="GO:0005615">
    <property type="term" value="C:extracellular space"/>
    <property type="evidence" value="ECO:0000318"/>
    <property type="project" value="GO_Central"/>
</dbReference>
<dbReference type="GO" id="GO:0008083">
    <property type="term" value="F:growth factor activity"/>
    <property type="evidence" value="ECO:0007669"/>
    <property type="project" value="UniProtKB-KW"/>
</dbReference>
<dbReference type="GO" id="GO:0071542">
    <property type="term" value="P:dopaminergic neuron differentiation"/>
    <property type="evidence" value="ECO:0000318"/>
    <property type="project" value="GO_Central"/>
</dbReference>
<dbReference type="GO" id="GO:0031175">
    <property type="term" value="P:neuron projection development"/>
    <property type="evidence" value="ECO:0000318"/>
    <property type="project" value="GO_Central"/>
</dbReference>
<dbReference type="FunFam" id="1.10.225.10:FF:000003">
    <property type="entry name" value="Mesencephalic astrocyte-derived neurotrophic factor"/>
    <property type="match status" value="1"/>
</dbReference>
<dbReference type="FunFam" id="1.10.720.30:FF:000003">
    <property type="entry name" value="Mesencephalic astrocyte-derived neurotrophic factor"/>
    <property type="match status" value="1"/>
</dbReference>
<dbReference type="Gene3D" id="1.10.720.30">
    <property type="entry name" value="SAP domain"/>
    <property type="match status" value="1"/>
</dbReference>
<dbReference type="Gene3D" id="1.10.225.10">
    <property type="entry name" value="Saposin-like"/>
    <property type="match status" value="1"/>
</dbReference>
<dbReference type="InterPro" id="IPR045333">
    <property type="entry name" value="ARMET-like"/>
</dbReference>
<dbReference type="InterPro" id="IPR019345">
    <property type="entry name" value="ARMET_C"/>
</dbReference>
<dbReference type="InterPro" id="IPR045332">
    <property type="entry name" value="ARMET_N"/>
</dbReference>
<dbReference type="InterPro" id="IPR036361">
    <property type="entry name" value="SAP_dom_sf"/>
</dbReference>
<dbReference type="PANTHER" id="PTHR12990">
    <property type="entry name" value="ARMET-LIKE PROTEIN"/>
    <property type="match status" value="1"/>
</dbReference>
<dbReference type="PANTHER" id="PTHR12990:SF9">
    <property type="entry name" value="CEREBRAL DOPAMINE NEUROTROPHIC FACTOR"/>
    <property type="match status" value="1"/>
</dbReference>
<dbReference type="Pfam" id="PF10208">
    <property type="entry name" value="ARMET_C"/>
    <property type="match status" value="1"/>
</dbReference>
<dbReference type="Pfam" id="PF20145">
    <property type="entry name" value="ARMET_N"/>
    <property type="match status" value="1"/>
</dbReference>
<dbReference type="SUPFAM" id="SSF68906">
    <property type="entry name" value="SAP domain"/>
    <property type="match status" value="1"/>
</dbReference>
<proteinExistence type="evidence at protein level"/>
<evidence type="ECO:0000250" key="1"/>
<evidence type="ECO:0000255" key="2"/>
<evidence type="ECO:0000269" key="3">
    <source>
    </source>
</evidence>
<evidence type="ECO:0000269" key="4">
    <source>
    </source>
</evidence>
<evidence type="ECO:0000269" key="5">
    <source>
    </source>
</evidence>
<evidence type="ECO:0000303" key="6">
    <source>
    </source>
</evidence>
<evidence type="ECO:0000305" key="7"/>
<evidence type="ECO:0007829" key="8">
    <source>
        <dbReference type="PDB" id="2W50"/>
    </source>
</evidence>
<evidence type="ECO:0007829" key="9">
    <source>
        <dbReference type="PDB" id="4BIT"/>
    </source>
</evidence>
<organism>
    <name type="scientific">Homo sapiens</name>
    <name type="common">Human</name>
    <dbReference type="NCBI Taxonomy" id="9606"/>
    <lineage>
        <taxon>Eukaryota</taxon>
        <taxon>Metazoa</taxon>
        <taxon>Chordata</taxon>
        <taxon>Craniata</taxon>
        <taxon>Vertebrata</taxon>
        <taxon>Euteleostomi</taxon>
        <taxon>Mammalia</taxon>
        <taxon>Eutheria</taxon>
        <taxon>Euarchontoglires</taxon>
        <taxon>Primates</taxon>
        <taxon>Haplorrhini</taxon>
        <taxon>Catarrhini</taxon>
        <taxon>Hominidae</taxon>
        <taxon>Homo</taxon>
    </lineage>
</organism>
<reference key="1">
    <citation type="journal article" date="2004" name="Nat. Genet.">
        <title>Complete sequencing and characterization of 21,243 full-length human cDNAs.</title>
        <authorList>
            <person name="Ota T."/>
            <person name="Suzuki Y."/>
            <person name="Nishikawa T."/>
            <person name="Otsuki T."/>
            <person name="Sugiyama T."/>
            <person name="Irie R."/>
            <person name="Wakamatsu A."/>
            <person name="Hayashi K."/>
            <person name="Sato H."/>
            <person name="Nagai K."/>
            <person name="Kimura K."/>
            <person name="Makita H."/>
            <person name="Sekine M."/>
            <person name="Obayashi M."/>
            <person name="Nishi T."/>
            <person name="Shibahara T."/>
            <person name="Tanaka T."/>
            <person name="Ishii S."/>
            <person name="Yamamoto J."/>
            <person name="Saito K."/>
            <person name="Kawai Y."/>
            <person name="Isono Y."/>
            <person name="Nakamura Y."/>
            <person name="Nagahari K."/>
            <person name="Murakami K."/>
            <person name="Yasuda T."/>
            <person name="Iwayanagi T."/>
            <person name="Wagatsuma M."/>
            <person name="Shiratori A."/>
            <person name="Sudo H."/>
            <person name="Hosoiri T."/>
            <person name="Kaku Y."/>
            <person name="Kodaira H."/>
            <person name="Kondo H."/>
            <person name="Sugawara M."/>
            <person name="Takahashi M."/>
            <person name="Kanda K."/>
            <person name="Yokoi T."/>
            <person name="Furuya T."/>
            <person name="Kikkawa E."/>
            <person name="Omura Y."/>
            <person name="Abe K."/>
            <person name="Kamihara K."/>
            <person name="Katsuta N."/>
            <person name="Sato K."/>
            <person name="Tanikawa M."/>
            <person name="Yamazaki M."/>
            <person name="Ninomiya K."/>
            <person name="Ishibashi T."/>
            <person name="Yamashita H."/>
            <person name="Murakawa K."/>
            <person name="Fujimori K."/>
            <person name="Tanai H."/>
            <person name="Kimata M."/>
            <person name="Watanabe M."/>
            <person name="Hiraoka S."/>
            <person name="Chiba Y."/>
            <person name="Ishida S."/>
            <person name="Ono Y."/>
            <person name="Takiguchi S."/>
            <person name="Watanabe S."/>
            <person name="Yosida M."/>
            <person name="Hotuta T."/>
            <person name="Kusano J."/>
            <person name="Kanehori K."/>
            <person name="Takahashi-Fujii A."/>
            <person name="Hara H."/>
            <person name="Tanase T.-O."/>
            <person name="Nomura Y."/>
            <person name="Togiya S."/>
            <person name="Komai F."/>
            <person name="Hara R."/>
            <person name="Takeuchi K."/>
            <person name="Arita M."/>
            <person name="Imose N."/>
            <person name="Musashino K."/>
            <person name="Yuuki H."/>
            <person name="Oshima A."/>
            <person name="Sasaki N."/>
            <person name="Aotsuka S."/>
            <person name="Yoshikawa Y."/>
            <person name="Matsunawa H."/>
            <person name="Ichihara T."/>
            <person name="Shiohata N."/>
            <person name="Sano S."/>
            <person name="Moriya S."/>
            <person name="Momiyama H."/>
            <person name="Satoh N."/>
            <person name="Takami S."/>
            <person name="Terashima Y."/>
            <person name="Suzuki O."/>
            <person name="Nakagawa S."/>
            <person name="Senoh A."/>
            <person name="Mizoguchi H."/>
            <person name="Goto Y."/>
            <person name="Shimizu F."/>
            <person name="Wakebe H."/>
            <person name="Hishigaki H."/>
            <person name="Watanabe T."/>
            <person name="Sugiyama A."/>
            <person name="Takemoto M."/>
            <person name="Kawakami B."/>
            <person name="Yamazaki M."/>
            <person name="Watanabe K."/>
            <person name="Kumagai A."/>
            <person name="Itakura S."/>
            <person name="Fukuzumi Y."/>
            <person name="Fujimori Y."/>
            <person name="Komiyama M."/>
            <person name="Tashiro H."/>
            <person name="Tanigami A."/>
            <person name="Fujiwara T."/>
            <person name="Ono T."/>
            <person name="Yamada K."/>
            <person name="Fujii Y."/>
            <person name="Ozaki K."/>
            <person name="Hirao M."/>
            <person name="Ohmori Y."/>
            <person name="Kawabata A."/>
            <person name="Hikiji T."/>
            <person name="Kobatake N."/>
            <person name="Inagaki H."/>
            <person name="Ikema Y."/>
            <person name="Okamoto S."/>
            <person name="Okitani R."/>
            <person name="Kawakami T."/>
            <person name="Noguchi S."/>
            <person name="Itoh T."/>
            <person name="Shigeta K."/>
            <person name="Senba T."/>
            <person name="Matsumura K."/>
            <person name="Nakajima Y."/>
            <person name="Mizuno T."/>
            <person name="Morinaga M."/>
            <person name="Sasaki M."/>
            <person name="Togashi T."/>
            <person name="Oyama M."/>
            <person name="Hata H."/>
            <person name="Watanabe M."/>
            <person name="Komatsu T."/>
            <person name="Mizushima-Sugano J."/>
            <person name="Satoh T."/>
            <person name="Shirai Y."/>
            <person name="Takahashi Y."/>
            <person name="Nakagawa K."/>
            <person name="Okumura K."/>
            <person name="Nagase T."/>
            <person name="Nomura N."/>
            <person name="Kikuchi H."/>
            <person name="Masuho Y."/>
            <person name="Yamashita R."/>
            <person name="Nakai K."/>
            <person name="Yada T."/>
            <person name="Nakamura Y."/>
            <person name="Ohara O."/>
            <person name="Isogai T."/>
            <person name="Sugano S."/>
        </authorList>
    </citation>
    <scope>NUCLEOTIDE SEQUENCE [LARGE SCALE MRNA] (ISOFORM 1)</scope>
    <source>
        <tissue>Spleen</tissue>
    </source>
</reference>
<reference key="2">
    <citation type="submission" date="2005-09" db="EMBL/GenBank/DDBJ databases">
        <authorList>
            <person name="Mural R.J."/>
            <person name="Istrail S."/>
            <person name="Sutton G.G."/>
            <person name="Florea L."/>
            <person name="Halpern A.L."/>
            <person name="Mobarry C.M."/>
            <person name="Lippert R."/>
            <person name="Walenz B."/>
            <person name="Shatkay H."/>
            <person name="Dew I."/>
            <person name="Miller J.R."/>
            <person name="Flanigan M.J."/>
            <person name="Edwards N.J."/>
            <person name="Bolanos R."/>
            <person name="Fasulo D."/>
            <person name="Halldorsson B.V."/>
            <person name="Hannenhalli S."/>
            <person name="Turner R."/>
            <person name="Yooseph S."/>
            <person name="Lu F."/>
            <person name="Nusskern D.R."/>
            <person name="Shue B.C."/>
            <person name="Zheng X.H."/>
            <person name="Zhong F."/>
            <person name="Delcher A.L."/>
            <person name="Huson D.H."/>
            <person name="Kravitz S.A."/>
            <person name="Mouchard L."/>
            <person name="Reinert K."/>
            <person name="Remington K.A."/>
            <person name="Clark A.G."/>
            <person name="Waterman M.S."/>
            <person name="Eichler E.E."/>
            <person name="Adams M.D."/>
            <person name="Hunkapiller M.W."/>
            <person name="Myers E.W."/>
            <person name="Venter J.C."/>
        </authorList>
    </citation>
    <scope>NUCLEOTIDE SEQUENCE [LARGE SCALE GENOMIC DNA]</scope>
</reference>
<reference key="3">
    <citation type="journal article" date="2004" name="Genome Res.">
        <title>The status, quality, and expansion of the NIH full-length cDNA project: the Mammalian Gene Collection (MGC).</title>
        <authorList>
            <consortium name="The MGC Project Team"/>
        </authorList>
    </citation>
    <scope>NUCLEOTIDE SEQUENCE [LARGE SCALE MRNA] (ISOFORMS 1 AND 2)</scope>
    <source>
        <tissue>Testis</tissue>
    </source>
</reference>
<reference key="4">
    <citation type="journal article" date="2007" name="Nature">
        <title>Novel neurotrophic factor CDNF protects and rescues midbrain dopamine neurons in vivo.</title>
        <authorList>
            <person name="Lindholm P."/>
            <person name="Voutilainen M.H."/>
            <person name="Lauren J."/>
            <person name="Peraenen J."/>
            <person name="Leppaenen V.-M."/>
            <person name="Andressoo J.-O."/>
            <person name="Lindahl M."/>
            <person name="Janhunen S."/>
            <person name="Kalkkinen N."/>
            <person name="Timmusk T."/>
            <person name="Tuominen R.K."/>
            <person name="Saarma M."/>
        </authorList>
    </citation>
    <scope>SUBCELLULAR LOCATION</scope>
    <scope>TISSUE SPECIFICITY</scope>
</reference>
<reference key="5">
    <citation type="journal article" date="2008" name="Exp. Cell Res.">
        <title>Armet, a UPR-upregulated protein, inhibits cell proliferation and ER stress-induced cell death.</title>
        <authorList>
            <person name="Apostolou A."/>
            <person name="Shen Y."/>
            <person name="Liang Y."/>
            <person name="Luo J."/>
            <person name="Fang S."/>
        </authorList>
    </citation>
    <scope>SUBCELLULAR LOCATION</scope>
    <scope>INDUCTION</scope>
</reference>
<reference key="6">
    <citation type="journal article" date="2009" name="Protein Eng. Des. Sel.">
        <title>The structure of the conserved neurotrophic factors MANF and CDNF explains why they are bifunctional.</title>
        <authorList>
            <person name="Parkash V."/>
            <person name="Lindholm P."/>
            <person name="Peranen J."/>
            <person name="Kalkkinen N."/>
            <person name="Oksanen E."/>
            <person name="Saarma M."/>
            <person name="Leppanen V.-M."/>
            <person name="Goldman A."/>
        </authorList>
    </citation>
    <scope>X-RAY CRYSTALLOGRAPHY (1.60 ANGSTROMS) OF 32-133</scope>
    <scope>DISULFIDE BONDS</scope>
</reference>
<sequence length="187" mass="20964">MWCASPVAVVAFCAGLLVSHPVLTQGQEAGGRPGADCEVCKEFLNRFYKSLIDRGVNFSLDTIEKELISFCLDTKGKENRLCYYLGATKDAATKILSEVTRPMSVHMPAMKICEKLKKLDSQICELKYEKTLDLASVDLRKMRVAELKQILHSWGEECRACAEKTDYVNLIQELAPKYAATHPKTEL</sequence>